<evidence type="ECO:0000250" key="1">
    <source>
        <dbReference type="UniProtKB" id="Q9BVA0"/>
    </source>
</evidence>
<evidence type="ECO:0000255" key="2">
    <source>
        <dbReference type="HAMAP-Rule" id="MF_03022"/>
    </source>
</evidence>
<evidence type="ECO:0000256" key="3">
    <source>
        <dbReference type="SAM" id="MobiDB-lite"/>
    </source>
</evidence>
<sequence length="655" mass="71568">MATPSPTKTTWKLQEIVAHGSSVSSVVLGKSSGRLVATGGDDCRVNLWSVNKPNCIMSLTGHTTPVESVRFNNAEELIVAGSQSGSLRVWDLEAAKILRTLMGHKANVCSLDFHPYGDFVASGSLDTNIKLWDVRRKGCVFRYKGHTQAVRCLRFSPDGKWLASASDDHSVKLWDLTAGKMMAELSEHKGPVNIIEFHPNEYLLASGSADRTVRFWDLEKFQLIGCTEGETIPVRAILFSSDGGCIFCGGRDALRVYGWEPDQCFDTVPVGWGKVCDLAICNKQLIGVSSAQSTISSFVVDLTRVKMTGCAPQGPVPAEMPISQPAPAGTSLRRIYERPSTTCSKPKRVSPTSDDEEKESRAEIQNPEDYKEIFQPKNAISRTPPRNSEPFPAPPEDDTSILKEPVAPIPDVVTPATSNKNNTEQLQRPPVAASTPIVCQEPSPVPAPQSKPPVISAARNEPIGLKAADFLPAVKTSSPTEVVDDEAVSQIRKGHDTMCMVLTSRMRNLDTVRAVWSSGDIKTSIDSAVAINDLSVVVDLLNIINQKASLWKLDLCLTVLPQIEKMLQSKYESYVQTGCISLKLILQRFLPLITDILAAPPSVGVDISREERLSKCKLCYKQLRILSPLVKSKASQSGRYGSAFRELHLLMSGLE</sequence>
<protein>
    <recommendedName>
        <fullName evidence="2">Katanin p80 WD40 repeat-containing subunit B1</fullName>
        <shortName evidence="2">Katanin p80 subunit B1</shortName>
    </recommendedName>
    <alternativeName>
        <fullName evidence="2">p80 katanin</fullName>
    </alternativeName>
</protein>
<dbReference type="EMBL" id="CR926306">
    <property type="protein sequence ID" value="CAJ82237.1"/>
    <property type="molecule type" value="mRNA"/>
</dbReference>
<dbReference type="EMBL" id="BC067983">
    <property type="protein sequence ID" value="AAH67983.1"/>
    <property type="molecule type" value="mRNA"/>
</dbReference>
<dbReference type="RefSeq" id="NP_998874.1">
    <property type="nucleotide sequence ID" value="NM_213709.3"/>
</dbReference>
<dbReference type="RefSeq" id="XP_012816244.1">
    <property type="nucleotide sequence ID" value="XM_012960790.3"/>
</dbReference>
<dbReference type="RefSeq" id="XP_012816245.1">
    <property type="nucleotide sequence ID" value="XM_012960791.3"/>
</dbReference>
<dbReference type="RefSeq" id="XP_012816246.1">
    <property type="nucleotide sequence ID" value="XM_012960792.3"/>
</dbReference>
<dbReference type="SMR" id="Q6NVM2"/>
<dbReference type="FunCoup" id="Q6NVM2">
    <property type="interactions" value="1274"/>
</dbReference>
<dbReference type="STRING" id="8364.ENSXETP00000020690"/>
<dbReference type="PaxDb" id="8364-ENSXETP00000053740"/>
<dbReference type="DNASU" id="407924"/>
<dbReference type="GeneID" id="407924"/>
<dbReference type="KEGG" id="xtr:407924"/>
<dbReference type="AGR" id="Xenbase:XB-GENE-998271"/>
<dbReference type="CTD" id="10300"/>
<dbReference type="Xenbase" id="XB-GENE-998271">
    <property type="gene designation" value="katnb1"/>
</dbReference>
<dbReference type="eggNOG" id="KOG0267">
    <property type="taxonomic scope" value="Eukaryota"/>
</dbReference>
<dbReference type="HOGENOM" id="CLU_007811_3_0_1"/>
<dbReference type="InParanoid" id="Q6NVM2"/>
<dbReference type="OMA" id="AMDVQCP"/>
<dbReference type="OrthoDB" id="10251605at2759"/>
<dbReference type="PhylomeDB" id="Q6NVM2"/>
<dbReference type="Proteomes" id="UP000008143">
    <property type="component" value="Chromosome 4"/>
</dbReference>
<dbReference type="Bgee" id="ENSXETG00000025041">
    <property type="expression patterns" value="Expressed in egg cell and 13 other cell types or tissues"/>
</dbReference>
<dbReference type="GO" id="GO:0005813">
    <property type="term" value="C:centrosome"/>
    <property type="evidence" value="ECO:0007669"/>
    <property type="project" value="UniProtKB-SubCell"/>
</dbReference>
<dbReference type="GO" id="GO:0005737">
    <property type="term" value="C:cytoplasm"/>
    <property type="evidence" value="ECO:0000250"/>
    <property type="project" value="UniProtKB"/>
</dbReference>
<dbReference type="GO" id="GO:0008352">
    <property type="term" value="C:katanin complex"/>
    <property type="evidence" value="ECO:0007669"/>
    <property type="project" value="InterPro"/>
</dbReference>
<dbReference type="GO" id="GO:0005874">
    <property type="term" value="C:microtubule"/>
    <property type="evidence" value="ECO:0007669"/>
    <property type="project" value="UniProtKB-KW"/>
</dbReference>
<dbReference type="GO" id="GO:0005819">
    <property type="term" value="C:spindle"/>
    <property type="evidence" value="ECO:0000250"/>
    <property type="project" value="UniProtKB"/>
</dbReference>
<dbReference type="GO" id="GO:0000922">
    <property type="term" value="C:spindle pole"/>
    <property type="evidence" value="ECO:0000250"/>
    <property type="project" value="UniProtKB"/>
</dbReference>
<dbReference type="GO" id="GO:0008017">
    <property type="term" value="F:microtubule binding"/>
    <property type="evidence" value="ECO:0007669"/>
    <property type="project" value="UniProtKB-UniRule"/>
</dbReference>
<dbReference type="GO" id="GO:0051301">
    <property type="term" value="P:cell division"/>
    <property type="evidence" value="ECO:0007669"/>
    <property type="project" value="UniProtKB-KW"/>
</dbReference>
<dbReference type="GO" id="GO:0051013">
    <property type="term" value="P:microtubule severing"/>
    <property type="evidence" value="ECO:0007669"/>
    <property type="project" value="UniProtKB-UniRule"/>
</dbReference>
<dbReference type="CDD" id="cd00200">
    <property type="entry name" value="WD40"/>
    <property type="match status" value="1"/>
</dbReference>
<dbReference type="FunFam" id="2.130.10.10:FF:000846">
    <property type="entry name" value="Katanin p80 WD40 repeat-containing subunit B1 homolog"/>
    <property type="match status" value="1"/>
</dbReference>
<dbReference type="Gene3D" id="2.130.10.10">
    <property type="entry name" value="YVTN repeat-like/Quinoprotein amine dehydrogenase"/>
    <property type="match status" value="2"/>
</dbReference>
<dbReference type="HAMAP" id="MF_03022">
    <property type="entry name" value="Katanin_p80_B1"/>
    <property type="match status" value="1"/>
</dbReference>
<dbReference type="InterPro" id="IPR020472">
    <property type="entry name" value="G-protein_beta_WD-40_rep"/>
</dbReference>
<dbReference type="InterPro" id="IPR028021">
    <property type="entry name" value="Katanin_C-terminal"/>
</dbReference>
<dbReference type="InterPro" id="IPR026962">
    <property type="entry name" value="KTNB1"/>
</dbReference>
<dbReference type="InterPro" id="IPR015943">
    <property type="entry name" value="WD40/YVTN_repeat-like_dom_sf"/>
</dbReference>
<dbReference type="InterPro" id="IPR019775">
    <property type="entry name" value="WD40_repeat_CS"/>
</dbReference>
<dbReference type="InterPro" id="IPR036322">
    <property type="entry name" value="WD40_repeat_dom_sf"/>
</dbReference>
<dbReference type="InterPro" id="IPR001680">
    <property type="entry name" value="WD40_rpt"/>
</dbReference>
<dbReference type="PANTHER" id="PTHR19845">
    <property type="entry name" value="KATANIN P80 SUBUNIT"/>
    <property type="match status" value="1"/>
</dbReference>
<dbReference type="PANTHER" id="PTHR19845:SF0">
    <property type="entry name" value="KATANIN P80 WD40 REPEAT-CONTAINING SUBUNIT B1"/>
    <property type="match status" value="1"/>
</dbReference>
<dbReference type="Pfam" id="PF13925">
    <property type="entry name" value="Katanin_con80"/>
    <property type="match status" value="1"/>
</dbReference>
<dbReference type="Pfam" id="PF00400">
    <property type="entry name" value="WD40"/>
    <property type="match status" value="5"/>
</dbReference>
<dbReference type="PRINTS" id="PR00320">
    <property type="entry name" value="GPROTEINBRPT"/>
</dbReference>
<dbReference type="SMART" id="SM00320">
    <property type="entry name" value="WD40"/>
    <property type="match status" value="6"/>
</dbReference>
<dbReference type="SUPFAM" id="SSF50978">
    <property type="entry name" value="WD40 repeat-like"/>
    <property type="match status" value="1"/>
</dbReference>
<dbReference type="PROSITE" id="PS00678">
    <property type="entry name" value="WD_REPEATS_1"/>
    <property type="match status" value="3"/>
</dbReference>
<dbReference type="PROSITE" id="PS50082">
    <property type="entry name" value="WD_REPEATS_2"/>
    <property type="match status" value="5"/>
</dbReference>
<dbReference type="PROSITE" id="PS50294">
    <property type="entry name" value="WD_REPEATS_REGION"/>
    <property type="match status" value="1"/>
</dbReference>
<name>KTNB1_XENTR</name>
<comment type="function">
    <text evidence="2">Participates in a complex which severs microtubules in an ATP-dependent manner. May act to target the enzymatic subunit of this complex to sites of action such as the centrosome. Microtubule severing may promote rapid reorganization of cellular microtubule arrays and the release of microtubules from the centrosome following nucleation.</text>
</comment>
<comment type="subunit">
    <text evidence="2">Interacts with katna1. This interaction enhances the microtubule binding and severing activity of katna1 and also targets this activity to the centrosome.</text>
</comment>
<comment type="subcellular location">
    <subcellularLocation>
        <location evidence="2">Cytoplasm</location>
    </subcellularLocation>
    <subcellularLocation>
        <location evidence="2">Cytoplasm</location>
        <location evidence="2">Cytoskeleton</location>
        <location evidence="2">Microtubule organizing center</location>
        <location evidence="2">Centrosome</location>
    </subcellularLocation>
    <subcellularLocation>
        <location evidence="2">Cytoplasm</location>
        <location evidence="2">Cytoskeleton</location>
        <location evidence="2">Spindle pole</location>
    </subcellularLocation>
    <subcellularLocation>
        <location evidence="2">Cytoplasm</location>
        <location evidence="2">Cytoskeleton</location>
    </subcellularLocation>
    <subcellularLocation>
        <location evidence="1">Cytoplasm</location>
        <location evidence="1">Cytoskeleton</location>
        <location evidence="1">Spindle</location>
    </subcellularLocation>
    <text evidence="2">Predominantly cytoplasmic. Localized to the interphase centrosome and mitotic spindle poles.</text>
</comment>
<comment type="similarity">
    <text evidence="2">Belongs to the WD repeat KATNB1 family.</text>
</comment>
<reference key="1">
    <citation type="submission" date="2006-10" db="EMBL/GenBank/DDBJ databases">
        <authorList>
            <consortium name="Sanger Xenopus tropicalis EST/cDNA project"/>
        </authorList>
    </citation>
    <scope>NUCLEOTIDE SEQUENCE [LARGE SCALE MRNA]</scope>
    <source>
        <tissue>Egg</tissue>
    </source>
</reference>
<reference key="2">
    <citation type="submission" date="2004-03" db="EMBL/GenBank/DDBJ databases">
        <authorList>
            <consortium name="NIH - Xenopus Gene Collection (XGC) project"/>
        </authorList>
    </citation>
    <scope>NUCLEOTIDE SEQUENCE [LARGE SCALE MRNA]</scope>
    <source>
        <tissue>Embryo</tissue>
    </source>
</reference>
<accession>Q6NVM2</accession>
<organism>
    <name type="scientific">Xenopus tropicalis</name>
    <name type="common">Western clawed frog</name>
    <name type="synonym">Silurana tropicalis</name>
    <dbReference type="NCBI Taxonomy" id="8364"/>
    <lineage>
        <taxon>Eukaryota</taxon>
        <taxon>Metazoa</taxon>
        <taxon>Chordata</taxon>
        <taxon>Craniata</taxon>
        <taxon>Vertebrata</taxon>
        <taxon>Euteleostomi</taxon>
        <taxon>Amphibia</taxon>
        <taxon>Batrachia</taxon>
        <taxon>Anura</taxon>
        <taxon>Pipoidea</taxon>
        <taxon>Pipidae</taxon>
        <taxon>Xenopodinae</taxon>
        <taxon>Xenopus</taxon>
        <taxon>Silurana</taxon>
    </lineage>
</organism>
<feature type="chain" id="PRO_0000270749" description="Katanin p80 WD40 repeat-containing subunit B1">
    <location>
        <begin position="1"/>
        <end position="655"/>
    </location>
</feature>
<feature type="repeat" description="WD 1">
    <location>
        <begin position="18"/>
        <end position="58"/>
    </location>
</feature>
<feature type="repeat" description="WD 2">
    <location>
        <begin position="61"/>
        <end position="100"/>
    </location>
</feature>
<feature type="repeat" description="WD 3">
    <location>
        <begin position="103"/>
        <end position="142"/>
    </location>
</feature>
<feature type="repeat" description="WD 4">
    <location>
        <begin position="145"/>
        <end position="184"/>
    </location>
</feature>
<feature type="repeat" description="WD 5">
    <location>
        <begin position="187"/>
        <end position="226"/>
    </location>
</feature>
<feature type="repeat" description="WD 6">
    <location>
        <begin position="229"/>
        <end position="269"/>
    </location>
</feature>
<feature type="region of interest" description="Disordered" evidence="3">
    <location>
        <begin position="316"/>
        <end position="453"/>
    </location>
</feature>
<feature type="compositionally biased region" description="Basic and acidic residues" evidence="3">
    <location>
        <begin position="358"/>
        <end position="374"/>
    </location>
</feature>
<feature type="compositionally biased region" description="Polar residues" evidence="3">
    <location>
        <begin position="415"/>
        <end position="426"/>
    </location>
</feature>
<keyword id="KW-0131">Cell cycle</keyword>
<keyword id="KW-0132">Cell division</keyword>
<keyword id="KW-0963">Cytoplasm</keyword>
<keyword id="KW-0206">Cytoskeleton</keyword>
<keyword id="KW-0493">Microtubule</keyword>
<keyword id="KW-0498">Mitosis</keyword>
<keyword id="KW-1185">Reference proteome</keyword>
<keyword id="KW-0677">Repeat</keyword>
<keyword id="KW-0853">WD repeat</keyword>
<gene>
    <name type="primary">katnb1</name>
    <name type="ORF">TEgg076g13.1</name>
</gene>
<proteinExistence type="evidence at transcript level"/>